<reference key="1">
    <citation type="journal article" date="2009" name="PLoS Biol.">
        <title>Lineage-specific biology revealed by a finished genome assembly of the mouse.</title>
        <authorList>
            <person name="Church D.M."/>
            <person name="Goodstadt L."/>
            <person name="Hillier L.W."/>
            <person name="Zody M.C."/>
            <person name="Goldstein S."/>
            <person name="She X."/>
            <person name="Bult C.J."/>
            <person name="Agarwala R."/>
            <person name="Cherry J.L."/>
            <person name="DiCuccio M."/>
            <person name="Hlavina W."/>
            <person name="Kapustin Y."/>
            <person name="Meric P."/>
            <person name="Maglott D."/>
            <person name="Birtle Z."/>
            <person name="Marques A.C."/>
            <person name="Graves T."/>
            <person name="Zhou S."/>
            <person name="Teague B."/>
            <person name="Potamousis K."/>
            <person name="Churas C."/>
            <person name="Place M."/>
            <person name="Herschleb J."/>
            <person name="Runnheim R."/>
            <person name="Forrest D."/>
            <person name="Amos-Landgraf J."/>
            <person name="Schwartz D.C."/>
            <person name="Cheng Z."/>
            <person name="Lindblad-Toh K."/>
            <person name="Eichler E.E."/>
            <person name="Ponting C.P."/>
        </authorList>
    </citation>
    <scope>NUCLEOTIDE SEQUENCE [LARGE SCALE GENOMIC DNA]</scope>
    <source>
        <strain>C57BL/6J</strain>
    </source>
</reference>
<reference key="2">
    <citation type="journal article" date="2010" name="J. Mol. Neurosci.">
        <title>C6ORF192 forms a unique evolutionary branch among solute carriers (SLC16, SLC17, and SLC18) and is abundantly expressed in several brain regions.</title>
        <authorList>
            <person name="Jacobsson J.A."/>
            <person name="Stephansson O."/>
            <person name="Fredriksson R."/>
        </authorList>
    </citation>
    <scope>TISSUE SPECIFICITY</scope>
</reference>
<reference key="3">
    <citation type="journal article" date="2014" name="Sci. Rep.">
        <title>Identification of a mammalian vesicular polyamine transporter.</title>
        <authorList>
            <person name="Hiasa M."/>
            <person name="Miyaji T."/>
            <person name="Haruna Y."/>
            <person name="Takeuchi T."/>
            <person name="Harada Y."/>
            <person name="Moriyama S."/>
            <person name="Yamamoto A."/>
            <person name="Omote H."/>
            <person name="Moriyama Y."/>
        </authorList>
    </citation>
    <scope>TISSUE SPECIFICITY</scope>
</reference>
<reference key="4">
    <citation type="journal article" date="2017" name="J. Biol. Chem.">
        <title>Vesicular Polyamine Transporter Mediates Vesicular Storage and Release of Polyamine from Mast Cells.</title>
        <authorList>
            <person name="Takeuchi T."/>
            <person name="Harada Y."/>
            <person name="Moriyama S."/>
            <person name="Furuta K."/>
            <person name="Tanaka S."/>
            <person name="Miyaji T."/>
            <person name="Omote H."/>
            <person name="Moriyama Y."/>
            <person name="Hiasa M."/>
        </authorList>
    </citation>
    <scope>FUNCTION</scope>
    <scope>SUBCELLULAR LOCATION</scope>
    <scope>TISSUE SPECIFICITY</scope>
</reference>
<reference key="5">
    <citation type="journal article" date="2019" name="PLoS Genet.">
        <title>The polyamine transporter Slc18b1(VPAT) is important for both short and long time memory and for regulation of polyamine content in the brain.</title>
        <authorList>
            <person name="Fredriksson R."/>
            <person name="Sreedharan S."/>
            <person name="Nordenankar K."/>
            <person name="Alsioe J."/>
            <person name="Lindberg F.A."/>
            <person name="Hutchinson A."/>
            <person name="Eriksson A."/>
            <person name="Roshanbin S."/>
            <person name="Ciuculete D.M."/>
            <person name="Klockars A."/>
            <person name="Todkar A."/>
            <person name="Haegglund M.G."/>
            <person name="Hellsten S.V."/>
            <person name="Hindlycke V."/>
            <person name="Vaestermark A."/>
            <person name="Shevchenko G."/>
            <person name="Olivo G."/>
            <person name="Cheng K."/>
            <person name="Kullander K."/>
            <person name="Moazzami A."/>
            <person name="Bergquist J."/>
            <person name="Olszewski P.K."/>
            <person name="Schioeth H.B."/>
        </authorList>
    </citation>
    <scope>FUNCTION</scope>
    <scope>DISRUPTION PHENOTYPE</scope>
</reference>
<proteinExistence type="evidence at protein level"/>
<feature type="chain" id="PRO_0000394864" description="MFS-type transporter SLC18B1">
    <location>
        <begin position="1"/>
        <end position="459"/>
    </location>
</feature>
<feature type="topological domain" description="Cytoplasmic" evidence="3">
    <location>
        <begin position="1"/>
        <end position="33"/>
    </location>
</feature>
<feature type="transmembrane region" description="Helical" evidence="3">
    <location>
        <begin position="34"/>
        <end position="54"/>
    </location>
</feature>
<feature type="topological domain" description="Extracellular" evidence="3">
    <location>
        <begin position="55"/>
        <end position="70"/>
    </location>
</feature>
<feature type="transmembrane region" description="Helical" evidence="3">
    <location>
        <begin position="71"/>
        <end position="91"/>
    </location>
</feature>
<feature type="topological domain" description="Cytoplasmic" evidence="3">
    <location>
        <begin position="92"/>
        <end position="100"/>
    </location>
</feature>
<feature type="transmembrane region" description="Helical" evidence="3">
    <location>
        <begin position="101"/>
        <end position="121"/>
    </location>
</feature>
<feature type="topological domain" description="Extracellular" evidence="3">
    <location>
        <begin position="122"/>
        <end position="127"/>
    </location>
</feature>
<feature type="transmembrane region" description="Helical" evidence="3">
    <location>
        <begin position="128"/>
        <end position="148"/>
    </location>
</feature>
<feature type="topological domain" description="Cytoplasmic" evidence="3">
    <location>
        <begin position="149"/>
        <end position="167"/>
    </location>
</feature>
<feature type="transmembrane region" description="Helical" evidence="3">
    <location>
        <begin position="168"/>
        <end position="188"/>
    </location>
</feature>
<feature type="topological domain" description="Extracellular" evidence="3">
    <location>
        <begin position="189"/>
        <end position="195"/>
    </location>
</feature>
<feature type="transmembrane region" description="Helical" evidence="3">
    <location>
        <begin position="196"/>
        <end position="216"/>
    </location>
</feature>
<feature type="topological domain" description="Cytoplasmic" evidence="3">
    <location>
        <begin position="217"/>
        <end position="235"/>
    </location>
</feature>
<feature type="transmembrane region" description="Helical" evidence="3">
    <location>
        <begin position="236"/>
        <end position="256"/>
    </location>
</feature>
<feature type="topological domain" description="Extracellular" evidence="3">
    <location>
        <begin position="257"/>
        <end position="274"/>
    </location>
</feature>
<feature type="transmembrane region" description="Helical" evidence="3">
    <location>
        <begin position="275"/>
        <end position="295"/>
    </location>
</feature>
<feature type="topological domain" description="Cytoplasmic" evidence="3">
    <location>
        <begin position="296"/>
        <end position="306"/>
    </location>
</feature>
<feature type="transmembrane region" description="Helical" evidence="3">
    <location>
        <begin position="307"/>
        <end position="327"/>
    </location>
</feature>
<feature type="topological domain" description="Extracellular" evidence="3">
    <location>
        <begin position="328"/>
        <end position="333"/>
    </location>
</feature>
<feature type="transmembrane region" description="Helical" evidence="3">
    <location>
        <begin position="334"/>
        <end position="354"/>
    </location>
</feature>
<feature type="topological domain" description="Cytoplasmic" evidence="3">
    <location>
        <begin position="355"/>
        <end position="379"/>
    </location>
</feature>
<feature type="transmembrane region" description="Helical" evidence="3">
    <location>
        <begin position="380"/>
        <end position="400"/>
    </location>
</feature>
<feature type="topological domain" description="Extracellular" evidence="3">
    <location>
        <begin position="401"/>
        <end position="409"/>
    </location>
</feature>
<feature type="transmembrane region" description="Helical" evidence="3">
    <location>
        <begin position="410"/>
        <end position="430"/>
    </location>
</feature>
<feature type="topological domain" description="Cytoplasmic" evidence="3">
    <location>
        <begin position="431"/>
        <end position="459"/>
    </location>
</feature>
<feature type="region of interest" description="Disordered" evidence="4">
    <location>
        <begin position="1"/>
        <end position="27"/>
    </location>
</feature>
<feature type="region of interest" description="Disordered" evidence="4">
    <location>
        <begin position="440"/>
        <end position="459"/>
    </location>
</feature>
<feature type="compositionally biased region" description="Low complexity" evidence="4">
    <location>
        <begin position="1"/>
        <end position="10"/>
    </location>
</feature>
<feature type="modified residue" description="N-acetylmethionine" evidence="2">
    <location>
        <position position="1"/>
    </location>
</feature>
<feature type="modified residue" description="Phosphoserine" evidence="2">
    <location>
        <position position="21"/>
    </location>
</feature>
<gene>
    <name evidence="9 11" type="primary">Slc18b1</name>
</gene>
<dbReference type="EMBL" id="AC153973">
    <property type="status" value="NOT_ANNOTATED_CDS"/>
    <property type="molecule type" value="Genomic_DNA"/>
</dbReference>
<dbReference type="EMBL" id="AC160147">
    <property type="status" value="NOT_ANNOTATED_CDS"/>
    <property type="molecule type" value="Genomic_DNA"/>
</dbReference>
<dbReference type="SMR" id="D3Z5L6"/>
<dbReference type="FunCoup" id="D3Z5L6">
    <property type="interactions" value="88"/>
</dbReference>
<dbReference type="STRING" id="10090.ENSMUSP00000112634"/>
<dbReference type="PhosphoSitePlus" id="D3Z5L6"/>
<dbReference type="PaxDb" id="10090-ENSMUSP00000112634"/>
<dbReference type="ProteomicsDB" id="253353"/>
<dbReference type="Antibodypedia" id="32950">
    <property type="antibodies" value="70 antibodies from 15 providers"/>
</dbReference>
<dbReference type="MGI" id="MGI:1923556">
    <property type="gene designation" value="Slc18b1"/>
</dbReference>
<dbReference type="VEuPathDB" id="HostDB:ENSMUSG00000037455"/>
<dbReference type="eggNOG" id="KOG3764">
    <property type="taxonomic scope" value="Eukaryota"/>
</dbReference>
<dbReference type="InParanoid" id="D3Z5L6"/>
<dbReference type="OMA" id="RLNFEWA"/>
<dbReference type="OrthoDB" id="6511931at2759"/>
<dbReference type="PhylomeDB" id="D3Z5L6"/>
<dbReference type="ChiTaRS" id="Slc18b1">
    <property type="organism name" value="mouse"/>
</dbReference>
<dbReference type="PRO" id="PR:D3Z5L6"/>
<dbReference type="Proteomes" id="UP000000589">
    <property type="component" value="Chromosome 10"/>
</dbReference>
<dbReference type="RNAct" id="D3Z5L6">
    <property type="molecule type" value="protein"/>
</dbReference>
<dbReference type="Bgee" id="ENSMUSG00000037455">
    <property type="expression patterns" value="Expressed in epididymal fat pad and 210 other cell types or tissues"/>
</dbReference>
<dbReference type="ExpressionAtlas" id="D3Z5L6">
    <property type="expression patterns" value="baseline and differential"/>
</dbReference>
<dbReference type="GO" id="GO:0030667">
    <property type="term" value="C:secretory granule membrane"/>
    <property type="evidence" value="ECO:0000314"/>
    <property type="project" value="UniProtKB"/>
</dbReference>
<dbReference type="GO" id="GO:0030672">
    <property type="term" value="C:synaptic vesicle membrane"/>
    <property type="evidence" value="ECO:0000250"/>
    <property type="project" value="UniProtKB"/>
</dbReference>
<dbReference type="GO" id="GO:0015311">
    <property type="term" value="F:monoamine:proton antiporter activity"/>
    <property type="evidence" value="ECO:0000250"/>
    <property type="project" value="UniProtKB"/>
</dbReference>
<dbReference type="GO" id="GO:0015312">
    <property type="term" value="F:polyamine:proton antiporter activity"/>
    <property type="evidence" value="ECO:0000250"/>
    <property type="project" value="UniProtKB"/>
</dbReference>
<dbReference type="GO" id="GO:0051610">
    <property type="term" value="P:serotonin uptake"/>
    <property type="evidence" value="ECO:0000250"/>
    <property type="project" value="UniProtKB"/>
</dbReference>
<dbReference type="GO" id="GO:0015848">
    <property type="term" value="P:spermidine transport"/>
    <property type="evidence" value="ECO:0000315"/>
    <property type="project" value="UniProtKB"/>
</dbReference>
<dbReference type="GO" id="GO:0000296">
    <property type="term" value="P:spermine transport"/>
    <property type="evidence" value="ECO:0000315"/>
    <property type="project" value="UniProtKB"/>
</dbReference>
<dbReference type="CDD" id="cd17385">
    <property type="entry name" value="MFS_SLC18B1"/>
    <property type="match status" value="1"/>
</dbReference>
<dbReference type="Gene3D" id="1.20.1250.20">
    <property type="entry name" value="MFS general substrate transporter like domains"/>
    <property type="match status" value="2"/>
</dbReference>
<dbReference type="InterPro" id="IPR011701">
    <property type="entry name" value="MFS"/>
</dbReference>
<dbReference type="InterPro" id="IPR020846">
    <property type="entry name" value="MFS_dom"/>
</dbReference>
<dbReference type="InterPro" id="IPR036259">
    <property type="entry name" value="MFS_trans_sf"/>
</dbReference>
<dbReference type="InterPro" id="IPR050930">
    <property type="entry name" value="MFS_Vesicular_Transporter"/>
</dbReference>
<dbReference type="PANTHER" id="PTHR23506">
    <property type="entry name" value="GH10249P"/>
    <property type="match status" value="1"/>
</dbReference>
<dbReference type="PANTHER" id="PTHR23506:SF26">
    <property type="entry name" value="MFS-TYPE TRANSPORTER SLC18B1"/>
    <property type="match status" value="1"/>
</dbReference>
<dbReference type="Pfam" id="PF07690">
    <property type="entry name" value="MFS_1"/>
    <property type="match status" value="1"/>
</dbReference>
<dbReference type="SUPFAM" id="SSF103473">
    <property type="entry name" value="MFS general substrate transporter"/>
    <property type="match status" value="1"/>
</dbReference>
<dbReference type="PROSITE" id="PS50850">
    <property type="entry name" value="MFS"/>
    <property type="match status" value="1"/>
</dbReference>
<evidence type="ECO:0000250" key="1">
    <source>
        <dbReference type="UniProtKB" id="D4A9K4"/>
    </source>
</evidence>
<evidence type="ECO:0000250" key="2">
    <source>
        <dbReference type="UniProtKB" id="Q6NT16"/>
    </source>
</evidence>
<evidence type="ECO:0000255" key="3"/>
<evidence type="ECO:0000256" key="4">
    <source>
        <dbReference type="SAM" id="MobiDB-lite"/>
    </source>
</evidence>
<evidence type="ECO:0000269" key="5">
    <source>
    </source>
</evidence>
<evidence type="ECO:0000269" key="6">
    <source>
    </source>
</evidence>
<evidence type="ECO:0000269" key="7">
    <source>
    </source>
</evidence>
<evidence type="ECO:0000269" key="8">
    <source>
    </source>
</evidence>
<evidence type="ECO:0000303" key="9">
    <source>
    </source>
</evidence>
<evidence type="ECO:0000305" key="10"/>
<evidence type="ECO:0000312" key="11">
    <source>
        <dbReference type="MGI" id="MGI:1923556"/>
    </source>
</evidence>
<sequence>MDEAGSPAPAGTGGGDDPGGSTRETSRRLSREQIFVLVSAASMNLGCMMTYSILGPFFPKEAEKKGASNTMIGMIFGCYALFELLASLVFGKYLVHIGAKFMFIAGMFVSGGVTILFGVLDQLPEGPIFIAMCFLVRIVDAIGFGAAITASSSILAKAFPNNVATVMGSLEVFSGLGLVAGPPLGGLLYQSFGYEVPFIFLGCIVLLMIPLNLYILPSYAQESDPGKQSFWKLVTLPKMGLLAFVIISLSSCFGFLDPTLSLFVMEKFSLSTGYVGLVFLGLSLSYAISSPLFGLLSDKMPTLRKWLLVFGNLITAGCYMLLGPVPLLHIKSQLWLLVLVLVVNGISAGMSIIPTFPEMLSCAYANGFEDSISTLGLVSGLFGAMWSVGAFMGPILGGFLCEKIGFEWAAAMQGLWTLLSGVSMALFYLWEDSTARRRSKAQNSLGTEEERAALLPNDT</sequence>
<organism>
    <name type="scientific">Mus musculus</name>
    <name type="common">Mouse</name>
    <dbReference type="NCBI Taxonomy" id="10090"/>
    <lineage>
        <taxon>Eukaryota</taxon>
        <taxon>Metazoa</taxon>
        <taxon>Chordata</taxon>
        <taxon>Craniata</taxon>
        <taxon>Vertebrata</taxon>
        <taxon>Euteleostomi</taxon>
        <taxon>Mammalia</taxon>
        <taxon>Eutheria</taxon>
        <taxon>Euarchontoglires</taxon>
        <taxon>Glires</taxon>
        <taxon>Rodentia</taxon>
        <taxon>Myomorpha</taxon>
        <taxon>Muroidea</taxon>
        <taxon>Muridae</taxon>
        <taxon>Murinae</taxon>
        <taxon>Mus</taxon>
        <taxon>Mus</taxon>
    </lineage>
</organism>
<keyword id="KW-0007">Acetylation</keyword>
<keyword id="KW-0968">Cytoplasmic vesicle</keyword>
<keyword id="KW-0472">Membrane</keyword>
<keyword id="KW-0597">Phosphoprotein</keyword>
<keyword id="KW-1185">Reference proteome</keyword>
<keyword id="KW-0770">Synapse</keyword>
<keyword id="KW-0812">Transmembrane</keyword>
<keyword id="KW-1133">Transmembrane helix</keyword>
<keyword id="KW-0813">Transport</keyword>
<comment type="function">
    <text evidence="1 2 7 8">Proton-coupled polyamine antiporter involved in the translocation of polyamines from cytosol into secretory vesicles prior to their release via exocytosis. Uses the electrochemical proton gradient generated by a V-type proton-pumping ATPase to couple the efflux of protons with the uptake of a polyamine molecule (By similarity). Facilitates vesicular storage of spermine and spermidine in astrocytes with an impact on glutamatergic neuronal transmission and memory formation (By similarity) (PubMed:31800589). Upon antigen stimulation, regulates polyamine accumulation and release in mast cell secretory granules, which in turn potentiates mast cell degranulation and histamine secretion (PubMed:28082679).</text>
</comment>
<comment type="catalytic activity">
    <reaction evidence="2">
        <text>spermine(in) + n H(+)(out) = spermine(out) + n H(+)(in)</text>
        <dbReference type="Rhea" id="RHEA:74263"/>
        <dbReference type="ChEBI" id="CHEBI:15378"/>
        <dbReference type="ChEBI" id="CHEBI:45725"/>
    </reaction>
    <physiologicalReaction direction="left-to-right" evidence="2">
        <dbReference type="Rhea" id="RHEA:74264"/>
    </physiologicalReaction>
</comment>
<comment type="catalytic activity">
    <reaction evidence="2">
        <text>spermidine(in) + n H(+)(out) = spermidine(out) + n H(+)(in)</text>
        <dbReference type="Rhea" id="RHEA:74267"/>
        <dbReference type="ChEBI" id="CHEBI:15378"/>
        <dbReference type="ChEBI" id="CHEBI:57834"/>
    </reaction>
    <physiologicalReaction direction="left-to-right" evidence="2">
        <dbReference type="Rhea" id="RHEA:74268"/>
    </physiologicalReaction>
</comment>
<comment type="catalytic activity">
    <reaction evidence="2">
        <text>serotonin(in) + n H(+)(out) = serotonin(out) + n H(+)(in)</text>
        <dbReference type="Rhea" id="RHEA:74295"/>
        <dbReference type="ChEBI" id="CHEBI:15378"/>
        <dbReference type="ChEBI" id="CHEBI:350546"/>
    </reaction>
    <physiologicalReaction direction="left-to-right" evidence="2">
        <dbReference type="Rhea" id="RHEA:74296"/>
    </physiologicalReaction>
</comment>
<comment type="subcellular location">
    <subcellularLocation>
        <location evidence="7">Cytoplasmic vesicle</location>
        <location evidence="7">Secretory vesicle membrane</location>
        <topology evidence="3">Multi-pass membrane protein</topology>
    </subcellularLocation>
    <subcellularLocation>
        <location evidence="1">Cytoplasmic vesicle</location>
        <location evidence="1">Secretory vesicle</location>
        <location evidence="1">Synaptic vesicle membrane</location>
        <topology evidence="3">Multi-pass membrane protein</topology>
    </subcellularLocation>
    <text evidence="1 7">Colocalizes with VAMP3 and VAMP8 in mast cell secretory granules, which are distinct from histamine- and serotonin-containing granules (PubMed:28082679). Partly colocalizes with SYP in synaptic vesicles in hippocampal neurons. Colocalizes with SYP and VAMP2 in secretory vesicles of astrocytes (By similarity).</text>
</comment>
<comment type="tissue specificity">
    <text evidence="5 6 7">Widely expressed, with highest expression in the lung, pancreas and kidney (PubMed:19697161, PubMed:25355561). High expression in the CNS, particularly in the hypothalamus, the thalamus and the cerebellum. In the forebrain, abundantly expressed in the telencephalon, especially in the cerebral cortex layers, except layer 1, as well as in the induseum griseum, the piriform area, the taenia tecta, dorsal part and in the entorhinal area, lateral part. Lower levels in the bed anterior olfactory nucleus, posteroventral part and in layer two of the olfactory tubercle. In the amygdala, high levels observed in the intercalated nucleus and the medial nucleus. In the diencephalon, expressed in the nuclei in both the hypothalamus and thalamus. Among the hypothalamic areas, strongest expression in the arcuate nucleus and in the ventromedial nucleus, as well as in the suprachiasmatic nucleus, anterior nucleus, especially in its central part, and in the magnocellular division of the paraventricular nucleus. In the thalamus, highest levels in the medial habenula. Expression also observed in the paraventricular thalamic nucleus, parataenial nucleus, central medial nucleus, intermediodorsal nucleus and lateral dorsal nucleus. In the hindbrain, detected in the cerebellum and in the pons. In the midbrain and the medulla, expression levels were modest. In the midbrain, highest expression in the periaqueductal gray and all subdivisions of the interpeduncular nucleus, except for the caudal part. In the pons, the strongest labeling was seen in the nucleus incertus and in the tegmental nucleus (PubMed:19697161). Expressed in bone marrow-derived mast cells (at protein level) (PubMed:28082679).</text>
</comment>
<comment type="disruption phenotype">
    <text evidence="8">Mutant mice show impaired learning ability and memory functions associated with decreased accumulation of polyamines in the brain.</text>
</comment>
<comment type="similarity">
    <text evidence="10">Belongs to the major facilitator superfamily.</text>
</comment>
<name>S18B1_MOUSE</name>
<protein>
    <recommendedName>
        <fullName>MFS-type transporter SLC18B1</fullName>
    </recommendedName>
    <alternativeName>
        <fullName>Solute carrier family 18 member B1</fullName>
    </alternativeName>
    <alternativeName>
        <fullName evidence="9">Vesicular polyamine transporter</fullName>
        <shortName evidence="9">VPAT</shortName>
    </alternativeName>
</protein>
<accession>D3Z5L6</accession>